<proteinExistence type="evidence at protein level"/>
<evidence type="ECO:0000256" key="1">
    <source>
        <dbReference type="SAM" id="MobiDB-lite"/>
    </source>
</evidence>
<evidence type="ECO:0000269" key="2">
    <source>
    </source>
</evidence>
<evidence type="ECO:0000269" key="3">
    <source>
    </source>
</evidence>
<evidence type="ECO:0000269" key="4">
    <source>
    </source>
</evidence>
<evidence type="ECO:0000269" key="5">
    <source>
    </source>
</evidence>
<evidence type="ECO:0000269" key="6">
    <source>
    </source>
</evidence>
<evidence type="ECO:0000269" key="7">
    <source>
    </source>
</evidence>
<evidence type="ECO:0000269" key="8">
    <source>
    </source>
</evidence>
<evidence type="ECO:0000269" key="9">
    <source>
    </source>
</evidence>
<evidence type="ECO:0000305" key="10"/>
<evidence type="ECO:0007829" key="11">
    <source>
        <dbReference type="PDB" id="8A3T"/>
    </source>
</evidence>
<gene>
    <name type="primary">CDC16</name>
    <name type="ordered locus">YKL022C</name>
</gene>
<reference key="1">
    <citation type="journal article" date="1987" name="Nucleic Acids Res.">
        <title>Metal-binding, nucleic acid-binding finger sequences in the CDC16 gene of Saccharomyces cerevisiae.</title>
        <authorList>
            <person name="Icho T."/>
            <person name="Wickner R.B."/>
        </authorList>
    </citation>
    <scope>NUCLEOTIDE SEQUENCE [GENOMIC DNA]</scope>
    <source>
        <strain>R.B.Wickner 1385</strain>
    </source>
</reference>
<reference key="2">
    <citation type="journal article" date="1994" name="Nature">
        <title>Complete DNA sequence of yeast chromosome XI.</title>
        <authorList>
            <person name="Dujon B."/>
            <person name="Alexandraki D."/>
            <person name="Andre B."/>
            <person name="Ansorge W."/>
            <person name="Baladron V."/>
            <person name="Ballesta J.P.G."/>
            <person name="Banrevi A."/>
            <person name="Bolle P.-A."/>
            <person name="Bolotin-Fukuhara M."/>
            <person name="Bossier P."/>
            <person name="Bou G."/>
            <person name="Boyer J."/>
            <person name="Buitrago M.J."/>
            <person name="Cheret G."/>
            <person name="Colleaux L."/>
            <person name="Daignan-Fornier B."/>
            <person name="del Rey F."/>
            <person name="Dion C."/>
            <person name="Domdey H."/>
            <person name="Duesterhoeft A."/>
            <person name="Duesterhus S."/>
            <person name="Entian K.-D."/>
            <person name="Erfle H."/>
            <person name="Esteban P.F."/>
            <person name="Feldmann H."/>
            <person name="Fernandes L."/>
            <person name="Fobo G.M."/>
            <person name="Fritz C."/>
            <person name="Fukuhara H."/>
            <person name="Gabel C."/>
            <person name="Gaillon L."/>
            <person name="Garcia-Cantalejo J.M."/>
            <person name="Garcia-Ramirez J.J."/>
            <person name="Gent M.E."/>
            <person name="Ghazvini M."/>
            <person name="Goffeau A."/>
            <person name="Gonzalez A."/>
            <person name="Grothues D."/>
            <person name="Guerreiro P."/>
            <person name="Hegemann J.H."/>
            <person name="Hewitt N."/>
            <person name="Hilger F."/>
            <person name="Hollenberg C.P."/>
            <person name="Horaitis O."/>
            <person name="Indge K.J."/>
            <person name="Jacquier A."/>
            <person name="James C.M."/>
            <person name="Jauniaux J.-C."/>
            <person name="Jimenez A."/>
            <person name="Keuchel H."/>
            <person name="Kirchrath L."/>
            <person name="Kleine K."/>
            <person name="Koetter P."/>
            <person name="Legrain P."/>
            <person name="Liebl S."/>
            <person name="Louis E.J."/>
            <person name="Maia e Silva A."/>
            <person name="Marck C."/>
            <person name="Monnier A.-L."/>
            <person name="Moestl D."/>
            <person name="Mueller S."/>
            <person name="Obermaier B."/>
            <person name="Oliver S.G."/>
            <person name="Pallier C."/>
            <person name="Pascolo S."/>
            <person name="Pfeiffer F."/>
            <person name="Philippsen P."/>
            <person name="Planta R.J."/>
            <person name="Pohl F.M."/>
            <person name="Pohl T.M."/>
            <person name="Poehlmann R."/>
            <person name="Portetelle D."/>
            <person name="Purnelle B."/>
            <person name="Puzos V."/>
            <person name="Ramezani Rad M."/>
            <person name="Rasmussen S.W."/>
            <person name="Remacha M.A."/>
            <person name="Revuelta J.L."/>
            <person name="Richard G.-F."/>
            <person name="Rieger M."/>
            <person name="Rodrigues-Pousada C."/>
            <person name="Rose M."/>
            <person name="Rupp T."/>
            <person name="Santos M.A."/>
            <person name="Schwager C."/>
            <person name="Sensen C."/>
            <person name="Skala J."/>
            <person name="Soares H."/>
            <person name="Sor F."/>
            <person name="Stegemann J."/>
            <person name="Tettelin H."/>
            <person name="Thierry A."/>
            <person name="Tzermia M."/>
            <person name="Urrestarazu L.A."/>
            <person name="van Dyck L."/>
            <person name="van Vliet-Reedijk J.C."/>
            <person name="Valens M."/>
            <person name="Vandenbol M."/>
            <person name="Vilela C."/>
            <person name="Vissers S."/>
            <person name="von Wettstein D."/>
            <person name="Voss H."/>
            <person name="Wiemann S."/>
            <person name="Xu G."/>
            <person name="Zimmermann J."/>
            <person name="Haasemann M."/>
            <person name="Becker I."/>
            <person name="Mewes H.-W."/>
        </authorList>
    </citation>
    <scope>NUCLEOTIDE SEQUENCE [LARGE SCALE GENOMIC DNA]</scope>
    <source>
        <strain>ATCC 204508 / S288c</strain>
    </source>
</reference>
<reference key="3">
    <citation type="journal article" date="2014" name="G3 (Bethesda)">
        <title>The reference genome sequence of Saccharomyces cerevisiae: Then and now.</title>
        <authorList>
            <person name="Engel S.R."/>
            <person name="Dietrich F.S."/>
            <person name="Fisk D.G."/>
            <person name="Binkley G."/>
            <person name="Balakrishnan R."/>
            <person name="Costanzo M.C."/>
            <person name="Dwight S.S."/>
            <person name="Hitz B.C."/>
            <person name="Karra K."/>
            <person name="Nash R.S."/>
            <person name="Weng S."/>
            <person name="Wong E.D."/>
            <person name="Lloyd P."/>
            <person name="Skrzypek M.S."/>
            <person name="Miyasato S.R."/>
            <person name="Simison M."/>
            <person name="Cherry J.M."/>
        </authorList>
    </citation>
    <scope>GENOME REANNOTATION</scope>
    <source>
        <strain>ATCC 204508 / S288c</strain>
    </source>
</reference>
<reference key="4">
    <citation type="journal article" date="1994" name="EMBO J.">
        <title>Cdc16p, Cdc23p and Cdc27p form a complex essential for mitosis.</title>
        <authorList>
            <person name="Lamb J.R."/>
            <person name="Michaud W.A."/>
            <person name="Sikorski R.S."/>
            <person name="Hieter P.A."/>
        </authorList>
    </citation>
    <scope>FUNCTION</scope>
    <scope>SUBUNIT</scope>
</reference>
<reference key="5">
    <citation type="journal article" date="1998" name="Mol. Cell">
        <title>CDC16 controls initiation at chromosome replication origins.</title>
        <authorList>
            <person name="Heichman K.A."/>
            <person name="Roberts J.M."/>
        </authorList>
    </citation>
    <scope>FUNCTION</scope>
    <scope>MUTAGENESIS OF CYS-482 AND SER-557</scope>
</reference>
<reference key="6">
    <citation type="journal article" date="2000" name="J. Cell Biol.">
        <title>Phosphorylation by Cdc28 activates the Cdc20-dependent activity of the anaphase-promoting complex.</title>
        <authorList>
            <person name="Rudner A.D."/>
            <person name="Murray A.W."/>
        </authorList>
    </citation>
    <scope>FUNCTION</scope>
    <scope>PHOSPHORYLATION BY CDC28</scope>
    <scope>MUTAGENESIS OF SER-44; SER-59; SER-95; SER-103; THR-115 AND THR-406</scope>
</reference>
<reference key="7">
    <citation type="journal article" date="2000" name="Proc. Natl. Acad. Sci. U.S.A.">
        <title>Ama1p is a meiosis-specific regulator of the anaphase promoting complex/cyclosome in yeast.</title>
        <authorList>
            <person name="Cooper K.F."/>
            <person name="Mallory M.J."/>
            <person name="Egeland D.B."/>
            <person name="Jarnik M."/>
            <person name="Strich R."/>
        </authorList>
    </citation>
    <scope>INTERACTION WITH AMA1</scope>
</reference>
<reference key="8">
    <citation type="journal article" date="2003" name="Mol. Genet. Genomics">
        <title>A novel yeast mutant that is defective in regulation of the Anaphase-Promoting Complex by the spindle damage checkpoint.</title>
        <authorList>
            <person name="Lai L.A."/>
            <person name="Morabito L."/>
            <person name="Holloway S.L."/>
        </authorList>
    </citation>
    <scope>FUNCTION</scope>
    <scope>MUTAGENESIS OF SER-530</scope>
</reference>
<reference key="9">
    <citation type="journal article" date="2004" name="Mol. Cell. Biol.">
        <title>Swm1/Apc13 is an evolutionarily conserved subunit of the anaphase-promoting complex stabilizing the association of Cdc16 and Cdc27.</title>
        <authorList>
            <person name="Schwickart M."/>
            <person name="Havlis J."/>
            <person name="Habermann B."/>
            <person name="Bogdanova A."/>
            <person name="Camasses A."/>
            <person name="Oelschlaegel T."/>
            <person name="Shevchenko A."/>
            <person name="Zachariae W."/>
        </authorList>
    </citation>
    <scope>FUNCTION</scope>
    <scope>SUBUNIT</scope>
</reference>
<reference key="10">
    <citation type="journal article" date="1990" name="Cell">
        <title>A repeating amino acid motif in CDC23 defines a family of proteins and a new relationship among genes required for mitosis and RNA synthesis.</title>
        <authorList>
            <person name="Sikorski R.S."/>
            <person name="Boguski M.S."/>
            <person name="Goebl M."/>
            <person name="Hieter P.A."/>
        </authorList>
    </citation>
    <scope>DOMAINS TPR REPEATS</scope>
</reference>
<reference key="11">
    <citation type="journal article" date="2003" name="Nature">
        <title>Global analysis of protein localization in budding yeast.</title>
        <authorList>
            <person name="Huh W.-K."/>
            <person name="Falvo J.V."/>
            <person name="Gerke L.C."/>
            <person name="Carroll A.S."/>
            <person name="Howson R.W."/>
            <person name="Weissman J.S."/>
            <person name="O'Shea E.K."/>
        </authorList>
    </citation>
    <scope>SUBCELLULAR LOCATION [LARGE SCALE ANALYSIS]</scope>
</reference>
<reference key="12">
    <citation type="journal article" date="2003" name="Nature">
        <title>Global analysis of protein expression in yeast.</title>
        <authorList>
            <person name="Ghaemmaghami S."/>
            <person name="Huh W.-K."/>
            <person name="Bower K."/>
            <person name="Howson R.W."/>
            <person name="Belle A."/>
            <person name="Dephoure N."/>
            <person name="O'Shea E.K."/>
            <person name="Weissman J.S."/>
        </authorList>
    </citation>
    <scope>LEVEL OF PROTEIN EXPRESSION [LARGE SCALE ANALYSIS]</scope>
</reference>
<reference key="13">
    <citation type="journal article" date="2008" name="Mol. Cell. Proteomics">
        <title>A multidimensional chromatography technology for in-depth phosphoproteome analysis.</title>
        <authorList>
            <person name="Albuquerque C.P."/>
            <person name="Smolka M.B."/>
            <person name="Payne S.H."/>
            <person name="Bafna V."/>
            <person name="Eng J."/>
            <person name="Zhou H."/>
        </authorList>
    </citation>
    <scope>IDENTIFICATION BY MASS SPECTROMETRY [LARGE SCALE ANALYSIS]</scope>
</reference>
<reference key="14">
    <citation type="journal article" date="2009" name="Science">
        <title>Global analysis of Cdk1 substrate phosphorylation sites provides insights into evolution.</title>
        <authorList>
            <person name="Holt L.J."/>
            <person name="Tuch B.B."/>
            <person name="Villen J."/>
            <person name="Johnson A.D."/>
            <person name="Gygi S.P."/>
            <person name="Morgan D.O."/>
        </authorList>
    </citation>
    <scope>IDENTIFICATION BY MASS SPECTROMETRY [LARGE SCALE ANALYSIS]</scope>
</reference>
<keyword id="KW-0002">3D-structure</keyword>
<keyword id="KW-0131">Cell cycle</keyword>
<keyword id="KW-0132">Cell division</keyword>
<keyword id="KW-0498">Mitosis</keyword>
<keyword id="KW-0539">Nucleus</keyword>
<keyword id="KW-0597">Phosphoprotein</keyword>
<keyword id="KW-1185">Reference proteome</keyword>
<keyword id="KW-0677">Repeat</keyword>
<keyword id="KW-0802">TPR repeat</keyword>
<keyword id="KW-0833">Ubl conjugation pathway</keyword>
<sequence length="840" mass="94992">MKFCLYCCHCYIVICGKATHYYKSSKATSNLKSSNRVLMRNPMSPSEQHSQHNSTLAASPFVSNVSAARTQQSLPTDAQNDRLQQPWNRTNTATSPYQSLANSPLIQKLQANIMTPHQPSANSNSNSNSITGNVVNDNNLLASMSKNSMFGSTIPSTLRKVSLQREYKDSVDGVVRDEDNDEDVHNNGDAAANANNDRESKLGHNGPLTTTTLTTTTTATQLDVSELSAIERLRLWRFDALMQHMYRTAEYIADKVYNISNDPDDAFWLGQVYYNNNQYVRAVELITRNNLDGVNILCRYLLGLSFVKLQRFDDALDVIGEYNPFSEDPSTTAANTMSNNGNNSNTSQPVTDGGIKMESSLCFLRGKIYFAQNNFNKARDAFREAILVDIKNFEAFEMLLSKNLLTPQEEWDLFDSLDFKEFGEDKEIMKNLYKINLSKYINTEDITKSNEILAKDYKLADNVDVVRSKVDICYTQCKFNECLELCETVLENDEFNTNILPAYIGCLYELSNKNKLFLLSHRLAETFPKSAITWFSVATYYMSLDRISEAQKYYSKSSILDPSFAAAWLGFAHTYALEGEQDQALTAYSTASRFFPGMHLPKLFLGMQFMAMNSLNLAESYFVLAYDICPNDPLVLNEMGVMYFKKNEFVKAKKYLKKALEVVKDLDPSSRTTISIQLNLGHTYRKLNENEIAIKCFRCVLEKNDKNSEIHCSLGYLYLKTKKLQKAIDHLHKSLYLKPNNSSATALLKNALELNVTLSLDASHPLIDKSNLMSQASKDKASLNKKRSSLTYDPVNMAKRLRTQKEIFDQNNKALRKGGHDSKTGSNNADDDFDADMELE</sequence>
<organism>
    <name type="scientific">Saccharomyces cerevisiae (strain ATCC 204508 / S288c)</name>
    <name type="common">Baker's yeast</name>
    <dbReference type="NCBI Taxonomy" id="559292"/>
    <lineage>
        <taxon>Eukaryota</taxon>
        <taxon>Fungi</taxon>
        <taxon>Dikarya</taxon>
        <taxon>Ascomycota</taxon>
        <taxon>Saccharomycotina</taxon>
        <taxon>Saccharomycetes</taxon>
        <taxon>Saccharomycetales</taxon>
        <taxon>Saccharomycetaceae</taxon>
        <taxon>Saccharomyces</taxon>
    </lineage>
</organism>
<accession>P09798</accession>
<accession>D6VXR3</accession>
<comment type="function">
    <text evidence="2 4 7 8 9">Component of the anaphase promoting complex/cyclosome (APC/C), a cell cycle-regulated E3 ubiquitin-protein ligase complex that controls progression through mitosis and the G1 phase of the cell cycle. The APC/C is thought to confer substrate specificity and, in the presence of ubiquitin-conjugating E2 enzymes, it catalyzes the formation of protein-ubiquitin conjugates that are subsequently degraded by the 26S proteasome. In early mitosis, the APC/C is activated by CDC20 and targets securin PDS1, the B-type cyclin CLB5, and other anaphase inhibitory proteins for proteolysis, thereby triggering the separation of sister chromatids at the metaphase-to-anaphase transition. In late mitosis and in G1, degradation of CLB5 allows activation of the APC/C by CDH1, which is needed to destroy CDC20 and the B-type cyclin CLB2 to allow exit from mitosis and creating the low CDK state necessary for cytokinesis and for reforming prereplicative complexes in G1 prior to another round of replication.</text>
</comment>
<comment type="pathway">
    <text>Protein modification; protein ubiquitination.</text>
</comment>
<comment type="subunit">
    <text evidence="3 7 8">The APC/C is composed of at least 13 subunits that stay tightly associated throughout the cell cycle: APC1, APC2, APC4, APC5, APC9, APC11, CDC16, CDC23, CDC26, CDC27, DOC1, MND2 and SWM1. Interacts with AMA1.</text>
</comment>
<comment type="interaction">
    <interactant intactId="EBI-4208">
        <id>P09798</id>
    </interactant>
    <interactant intactId="EBI-2603">
        <id>P53068</id>
        <label>DOC1</label>
    </interactant>
    <organismsDiffer>false</organismsDiffer>
    <experiments>14</experiments>
</comment>
<comment type="subcellular location">
    <subcellularLocation>
        <location evidence="5">Nucleus</location>
    </subcellularLocation>
</comment>
<comment type="PTM">
    <text evidence="2">Phosphorylated by CDC28, which is required for the early mitotic activity of the APC/C in its CDC20-bound form.</text>
</comment>
<comment type="miscellaneous">
    <text evidence="6">Present with 2753 molecules/cell in log phase SD medium.</text>
</comment>
<comment type="similarity">
    <text evidence="10">Belongs to the APC6/CDC16 family.</text>
</comment>
<name>CDC16_YEAST</name>
<dbReference type="EMBL" id="X06165">
    <property type="protein sequence ID" value="CAA29521.1"/>
    <property type="molecule type" value="Genomic_DNA"/>
</dbReference>
<dbReference type="EMBL" id="Z28022">
    <property type="protein sequence ID" value="CAA81857.1"/>
    <property type="molecule type" value="Genomic_DNA"/>
</dbReference>
<dbReference type="EMBL" id="BK006944">
    <property type="protein sequence ID" value="DAA09133.1"/>
    <property type="molecule type" value="Genomic_DNA"/>
</dbReference>
<dbReference type="PIR" id="A27832">
    <property type="entry name" value="A27832"/>
</dbReference>
<dbReference type="RefSeq" id="NP_012903.1">
    <property type="nucleotide sequence ID" value="NM_001179588.1"/>
</dbReference>
<dbReference type="PDB" id="8A3T">
    <property type="method" value="EM"/>
    <property type="resolution" value="3.50 A"/>
    <property type="chains" value="J/K=1-840"/>
</dbReference>
<dbReference type="PDB" id="8A5Y">
    <property type="method" value="EM"/>
    <property type="resolution" value="4.90 A"/>
    <property type="chains" value="J/K=1-840"/>
</dbReference>
<dbReference type="PDB" id="8A61">
    <property type="method" value="EM"/>
    <property type="resolution" value="5.40 A"/>
    <property type="chains" value="J/K=1-840"/>
</dbReference>
<dbReference type="PDBsum" id="8A3T"/>
<dbReference type="PDBsum" id="8A5Y"/>
<dbReference type="PDBsum" id="8A61"/>
<dbReference type="EMDB" id="EMD-15123"/>
<dbReference type="EMDB" id="EMD-15199"/>
<dbReference type="EMDB" id="EMD-15201"/>
<dbReference type="SMR" id="P09798"/>
<dbReference type="BioGRID" id="34109">
    <property type="interactions" value="186"/>
</dbReference>
<dbReference type="ComplexPortal" id="CPX-756">
    <property type="entry name" value="Anaphase-Promoting core complex"/>
</dbReference>
<dbReference type="ComplexPortal" id="CPX-760">
    <property type="entry name" value="Anaphase-Promoting Complex, CDC20 variant"/>
</dbReference>
<dbReference type="ComplexPortal" id="CPX-761">
    <property type="entry name" value="Anaphase-Promoting Complex, CDH1 variant"/>
</dbReference>
<dbReference type="ComplexPortal" id="CPX-762">
    <property type="entry name" value="Anaphase-Promoting complex AMA1 variant"/>
</dbReference>
<dbReference type="DIP" id="DIP-25N"/>
<dbReference type="FunCoup" id="P09798">
    <property type="interactions" value="1438"/>
</dbReference>
<dbReference type="IntAct" id="P09798">
    <property type="interactions" value="30"/>
</dbReference>
<dbReference type="MINT" id="P09798"/>
<dbReference type="STRING" id="4932.YKL022C"/>
<dbReference type="GlyGen" id="P09798">
    <property type="glycosylation" value="2 sites, 1 O-linked glycan (2 sites)"/>
</dbReference>
<dbReference type="iPTMnet" id="P09798"/>
<dbReference type="PaxDb" id="4932-YKL022C"/>
<dbReference type="PeptideAtlas" id="P09798"/>
<dbReference type="TopDownProteomics" id="P09798"/>
<dbReference type="EnsemblFungi" id="YKL022C_mRNA">
    <property type="protein sequence ID" value="YKL022C"/>
    <property type="gene ID" value="YKL022C"/>
</dbReference>
<dbReference type="GeneID" id="853846"/>
<dbReference type="KEGG" id="sce:YKL022C"/>
<dbReference type="AGR" id="SGD:S000001505"/>
<dbReference type="SGD" id="S000001505">
    <property type="gene designation" value="CDC16"/>
</dbReference>
<dbReference type="VEuPathDB" id="FungiDB:YKL022C"/>
<dbReference type="eggNOG" id="KOG1173">
    <property type="taxonomic scope" value="Eukaryota"/>
</dbReference>
<dbReference type="GeneTree" id="ENSGT00950000182950"/>
<dbReference type="HOGENOM" id="CLU_011751_4_0_1"/>
<dbReference type="InParanoid" id="P09798"/>
<dbReference type="OMA" id="DPFHNNA"/>
<dbReference type="OrthoDB" id="10006270at2759"/>
<dbReference type="BioCyc" id="YEAST:G3O-31830-MONOMER"/>
<dbReference type="Reactome" id="R-SCE-983168">
    <property type="pathway name" value="Antigen processing: Ubiquitination &amp; Proteasome degradation"/>
</dbReference>
<dbReference type="UniPathway" id="UPA00143"/>
<dbReference type="BioGRID-ORCS" id="853846">
    <property type="hits" value="9 hits in 10 CRISPR screens"/>
</dbReference>
<dbReference type="PRO" id="PR:P09798"/>
<dbReference type="Proteomes" id="UP000002311">
    <property type="component" value="Chromosome XI"/>
</dbReference>
<dbReference type="RNAct" id="P09798">
    <property type="molecule type" value="protein"/>
</dbReference>
<dbReference type="GO" id="GO:0005680">
    <property type="term" value="C:anaphase-promoting complex"/>
    <property type="evidence" value="ECO:0000314"/>
    <property type="project" value="SGD"/>
</dbReference>
<dbReference type="GO" id="GO:0005737">
    <property type="term" value="C:cytoplasm"/>
    <property type="evidence" value="ECO:0000318"/>
    <property type="project" value="GO_Central"/>
</dbReference>
<dbReference type="GO" id="GO:0005829">
    <property type="term" value="C:cytosol"/>
    <property type="evidence" value="ECO:0000314"/>
    <property type="project" value="SGD"/>
</dbReference>
<dbReference type="GO" id="GO:0005634">
    <property type="term" value="C:nucleus"/>
    <property type="evidence" value="ECO:0000314"/>
    <property type="project" value="SGD"/>
</dbReference>
<dbReference type="GO" id="GO:0031145">
    <property type="term" value="P:anaphase-promoting complex-dependent catabolic process"/>
    <property type="evidence" value="ECO:0000314"/>
    <property type="project" value="ComplexPortal"/>
</dbReference>
<dbReference type="GO" id="GO:0051301">
    <property type="term" value="P:cell division"/>
    <property type="evidence" value="ECO:0000318"/>
    <property type="project" value="GO_Central"/>
</dbReference>
<dbReference type="GO" id="GO:0032297">
    <property type="term" value="P:negative regulation of DNA-templated DNA replication initiation"/>
    <property type="evidence" value="ECO:0000315"/>
    <property type="project" value="SGD"/>
</dbReference>
<dbReference type="GO" id="GO:0045842">
    <property type="term" value="P:positive regulation of mitotic metaphase/anaphase transition"/>
    <property type="evidence" value="ECO:0000318"/>
    <property type="project" value="GO_Central"/>
</dbReference>
<dbReference type="GO" id="GO:0016567">
    <property type="term" value="P:protein ubiquitination"/>
    <property type="evidence" value="ECO:0000314"/>
    <property type="project" value="ComplexPortal"/>
</dbReference>
<dbReference type="GO" id="GO:0051445">
    <property type="term" value="P:regulation of meiotic cell cycle"/>
    <property type="evidence" value="ECO:0000303"/>
    <property type="project" value="ComplexPortal"/>
</dbReference>
<dbReference type="GO" id="GO:0007346">
    <property type="term" value="P:regulation of mitotic cell cycle"/>
    <property type="evidence" value="ECO:0000303"/>
    <property type="project" value="ComplexPortal"/>
</dbReference>
<dbReference type="Gene3D" id="1.25.40.10">
    <property type="entry name" value="Tetratricopeptide repeat domain"/>
    <property type="match status" value="1"/>
</dbReference>
<dbReference type="InterPro" id="IPR011990">
    <property type="entry name" value="TPR-like_helical_dom_sf"/>
</dbReference>
<dbReference type="InterPro" id="IPR013105">
    <property type="entry name" value="TPR_2"/>
</dbReference>
<dbReference type="InterPro" id="IPR019734">
    <property type="entry name" value="TPR_rpt"/>
</dbReference>
<dbReference type="PANTHER" id="PTHR12558">
    <property type="entry name" value="CELL DIVISION CYCLE 16,23,27"/>
    <property type="match status" value="1"/>
</dbReference>
<dbReference type="PANTHER" id="PTHR12558:SF9">
    <property type="entry name" value="CELL DIVISION CYCLE PROTEIN 16 HOMOLOG"/>
    <property type="match status" value="1"/>
</dbReference>
<dbReference type="Pfam" id="PF12895">
    <property type="entry name" value="ANAPC3"/>
    <property type="match status" value="1"/>
</dbReference>
<dbReference type="Pfam" id="PF13424">
    <property type="entry name" value="TPR_12"/>
    <property type="match status" value="1"/>
</dbReference>
<dbReference type="Pfam" id="PF07719">
    <property type="entry name" value="TPR_2"/>
    <property type="match status" value="1"/>
</dbReference>
<dbReference type="Pfam" id="PF13181">
    <property type="entry name" value="TPR_8"/>
    <property type="match status" value="1"/>
</dbReference>
<dbReference type="SMART" id="SM00028">
    <property type="entry name" value="TPR"/>
    <property type="match status" value="8"/>
</dbReference>
<dbReference type="SUPFAM" id="SSF48452">
    <property type="entry name" value="TPR-like"/>
    <property type="match status" value="2"/>
</dbReference>
<dbReference type="PROSITE" id="PS50005">
    <property type="entry name" value="TPR"/>
    <property type="match status" value="7"/>
</dbReference>
<dbReference type="PROSITE" id="PS50293">
    <property type="entry name" value="TPR_REGION"/>
    <property type="match status" value="2"/>
</dbReference>
<protein>
    <recommendedName>
        <fullName>Anaphase-promoting complex subunit CDC16</fullName>
    </recommendedName>
    <alternativeName>
        <fullName>Cell division control protein 16</fullName>
    </alternativeName>
</protein>
<feature type="chain" id="PRO_0000106269" description="Anaphase-promoting complex subunit CDC16">
    <location>
        <begin position="1"/>
        <end position="840"/>
    </location>
</feature>
<feature type="repeat" description="TPR 1">
    <location>
        <begin position="229"/>
        <end position="260"/>
    </location>
</feature>
<feature type="repeat" description="TPR 2">
    <location>
        <begin position="263"/>
        <end position="288"/>
    </location>
</feature>
<feature type="repeat" description="TPR 3">
    <location>
        <begin position="296"/>
        <end position="319"/>
    </location>
</feature>
<feature type="repeat" description="TPR 4">
    <location>
        <begin position="357"/>
        <end position="388"/>
    </location>
</feature>
<feature type="repeat" description="TPR 5">
    <location>
        <begin position="393"/>
        <end position="416"/>
    </location>
</feature>
<feature type="repeat" description="TPR 6">
    <location>
        <begin position="426"/>
        <end position="454"/>
    </location>
</feature>
<feature type="repeat" description="TPR 7">
    <location>
        <begin position="464"/>
        <end position="492"/>
    </location>
</feature>
<feature type="repeat" description="TPR 8">
    <location>
        <begin position="499"/>
        <end position="526"/>
    </location>
</feature>
<feature type="repeat" description="TPR 9">
    <location>
        <begin position="531"/>
        <end position="560"/>
    </location>
</feature>
<feature type="repeat" description="TPR 10">
    <location>
        <begin position="565"/>
        <end position="593"/>
    </location>
</feature>
<feature type="repeat" description="TPR 11">
    <location>
        <begin position="600"/>
        <end position="628"/>
    </location>
</feature>
<feature type="repeat" description="TPR 12">
    <location>
        <begin position="633"/>
        <end position="665"/>
    </location>
</feature>
<feature type="repeat" description="TPR 13">
    <location>
        <begin position="671"/>
        <end position="703"/>
    </location>
</feature>
<feature type="repeat" description="TPR 14">
    <location>
        <begin position="708"/>
        <end position="737"/>
    </location>
</feature>
<feature type="region of interest" description="Disordered" evidence="1">
    <location>
        <begin position="67"/>
        <end position="97"/>
    </location>
</feature>
<feature type="region of interest" description="Disordered" evidence="1">
    <location>
        <begin position="173"/>
        <end position="212"/>
    </location>
</feature>
<feature type="region of interest" description="Disordered" evidence="1">
    <location>
        <begin position="329"/>
        <end position="350"/>
    </location>
</feature>
<feature type="region of interest" description="Disordered" evidence="1">
    <location>
        <begin position="802"/>
        <end position="840"/>
    </location>
</feature>
<feature type="compositionally biased region" description="Low complexity" evidence="1">
    <location>
        <begin position="330"/>
        <end position="347"/>
    </location>
</feature>
<feature type="compositionally biased region" description="Acidic residues" evidence="1">
    <location>
        <begin position="829"/>
        <end position="840"/>
    </location>
</feature>
<feature type="mutagenesis site" description="Abolishes phosphorylation; when associated with A-59; A-95; A-103; A-115 and A-406." evidence="2">
    <original>S</original>
    <variation>A</variation>
    <location>
        <position position="44"/>
    </location>
</feature>
<feature type="mutagenesis site" description="Abolishes phosphorylation; when associated with A-44; A-95; A-103; A-115 and A-406." evidence="2">
    <original>S</original>
    <variation>A</variation>
    <location>
        <position position="59"/>
    </location>
</feature>
<feature type="mutagenesis site" description="Abolishes phosphorylation; when associated with A-44; A-59; A-103; A-115 and A-406." evidence="2">
    <original>S</original>
    <variation>A</variation>
    <location>
        <position position="95"/>
    </location>
</feature>
<feature type="mutagenesis site" description="Abolishes phosphorylation; when associated with A-44; A-59; A-95; A-115 and A-406." evidence="2">
    <original>S</original>
    <variation>A</variation>
    <location>
        <position position="103"/>
    </location>
</feature>
<feature type="mutagenesis site" description="Abolishes phosphorylation; when associated with A-44; A-59; A-95; A-103 and A-406." evidence="2">
    <original>T</original>
    <variation>A</variation>
    <location>
        <position position="115"/>
    </location>
</feature>
<feature type="mutagenesis site" description="Abolishes phosphorylation; when associated with A-44; A-59; A-95; A-103 and A-115." evidence="2">
    <original>T</original>
    <variation>A</variation>
    <location>
        <position position="406"/>
    </location>
</feature>
<feature type="mutagenesis site" description="In CDC16-264; G2/M cell cycle arrest at 36 degrees Celsius." evidence="9">
    <original>C</original>
    <variation>Y</variation>
    <location>
        <position position="482"/>
    </location>
</feature>
<feature type="mutagenesis site" description="In CDC16-183; G2/M cell cycle arrest at 37 degrees Celsius." evidence="4">
    <original>S</original>
    <variation>P</variation>
    <location>
        <position position="530"/>
    </location>
</feature>
<feature type="mutagenesis site" description="In CDC16-1; G2/M cell cycle arrest at 36 degrees Celsius." evidence="9">
    <original>S</original>
    <variation>F</variation>
    <location>
        <position position="557"/>
    </location>
</feature>
<feature type="helix" evidence="11">
    <location>
        <begin position="230"/>
        <end position="242"/>
    </location>
</feature>
<feature type="helix" evidence="11">
    <location>
        <begin position="246"/>
        <end position="259"/>
    </location>
</feature>
<feature type="helix" evidence="11">
    <location>
        <begin position="263"/>
        <end position="275"/>
    </location>
</feature>
<feature type="helix" evidence="11">
    <location>
        <begin position="279"/>
        <end position="288"/>
    </location>
</feature>
<feature type="helix" evidence="11">
    <location>
        <begin position="296"/>
        <end position="308"/>
    </location>
</feature>
<feature type="helix" evidence="11">
    <location>
        <begin position="312"/>
        <end position="319"/>
    </location>
</feature>
<feature type="helix" evidence="11">
    <location>
        <begin position="357"/>
        <end position="371"/>
    </location>
</feature>
<feature type="helix" evidence="11">
    <location>
        <begin position="375"/>
        <end position="388"/>
    </location>
</feature>
<feature type="helix" evidence="11">
    <location>
        <begin position="394"/>
        <end position="401"/>
    </location>
</feature>
<feature type="helix" evidence="11">
    <location>
        <begin position="407"/>
        <end position="416"/>
    </location>
</feature>
<feature type="turn" evidence="11">
    <location>
        <begin position="420"/>
        <end position="422"/>
    </location>
</feature>
<feature type="helix" evidence="11">
    <location>
        <begin position="423"/>
        <end position="425"/>
    </location>
</feature>
<feature type="helix" evidence="11">
    <location>
        <begin position="426"/>
        <end position="435"/>
    </location>
</feature>
<feature type="strand" evidence="11">
    <location>
        <begin position="439"/>
        <end position="441"/>
    </location>
</feature>
<feature type="helix" evidence="11">
    <location>
        <begin position="443"/>
        <end position="456"/>
    </location>
</feature>
<feature type="helix" evidence="11">
    <location>
        <begin position="463"/>
        <end position="475"/>
    </location>
</feature>
<feature type="helix" evidence="11">
    <location>
        <begin position="479"/>
        <end position="490"/>
    </location>
</feature>
<feature type="turn" evidence="11">
    <location>
        <begin position="497"/>
        <end position="499"/>
    </location>
</feature>
<feature type="helix" evidence="11">
    <location>
        <begin position="500"/>
        <end position="510"/>
    </location>
</feature>
<feature type="helix" evidence="11">
    <location>
        <begin position="513"/>
        <end position="526"/>
    </location>
</feature>
<feature type="strand" evidence="11">
    <location>
        <begin position="528"/>
        <end position="530"/>
    </location>
</feature>
<feature type="helix" evidence="11">
    <location>
        <begin position="531"/>
        <end position="542"/>
    </location>
</feature>
<feature type="helix" evidence="11">
    <location>
        <begin position="547"/>
        <end position="560"/>
    </location>
</feature>
<feature type="strand" evidence="11">
    <location>
        <begin position="561"/>
        <end position="563"/>
    </location>
</feature>
<feature type="helix" evidence="11">
    <location>
        <begin position="565"/>
        <end position="577"/>
    </location>
</feature>
<feature type="helix" evidence="11">
    <location>
        <begin position="584"/>
        <end position="594"/>
    </location>
</feature>
<feature type="helix" evidence="11">
    <location>
        <begin position="599"/>
        <end position="611"/>
    </location>
</feature>
<feature type="helix" evidence="11">
    <location>
        <begin position="616"/>
        <end position="628"/>
    </location>
</feature>
<feature type="helix" evidence="11">
    <location>
        <begin position="633"/>
        <end position="645"/>
    </location>
</feature>
<feature type="helix" evidence="11">
    <location>
        <begin position="651"/>
        <end position="662"/>
    </location>
</feature>
<feature type="strand" evidence="11">
    <location>
        <begin position="664"/>
        <end position="666"/>
    </location>
</feature>
<feature type="turn" evidence="11">
    <location>
        <begin position="670"/>
        <end position="672"/>
    </location>
</feature>
<feature type="helix" evidence="11">
    <location>
        <begin position="673"/>
        <end position="686"/>
    </location>
</feature>
<feature type="helix" evidence="11">
    <location>
        <begin position="690"/>
        <end position="703"/>
    </location>
</feature>
<feature type="helix" evidence="11">
    <location>
        <begin position="708"/>
        <end position="720"/>
    </location>
</feature>
<feature type="helix" evidence="11">
    <location>
        <begin position="724"/>
        <end position="737"/>
    </location>
</feature>
<feature type="helix" evidence="11">
    <location>
        <begin position="742"/>
        <end position="757"/>
    </location>
</feature>